<evidence type="ECO:0000250" key="1">
    <source>
        <dbReference type="UniProtKB" id="O04023"/>
    </source>
</evidence>
<evidence type="ECO:0000255" key="2"/>
<evidence type="ECO:0000255" key="3">
    <source>
        <dbReference type="PROSITE-ProRule" id="PRU00041"/>
    </source>
</evidence>
<evidence type="ECO:0000256" key="4">
    <source>
        <dbReference type="SAM" id="MobiDB-lite"/>
    </source>
</evidence>
<evidence type="ECO:0000269" key="5">
    <source ref="1"/>
</evidence>
<evidence type="ECO:0000303" key="6">
    <source ref="1"/>
</evidence>
<evidence type="ECO:0000305" key="7"/>
<comment type="function">
    <text evidence="1">May play a role in cold responses.</text>
</comment>
<comment type="subcellular location">
    <subcellularLocation>
        <location evidence="1">Endoplasmic reticulum membrane</location>
        <topology evidence="2">Single-pass type II membrane protein</topology>
    </subcellularLocation>
    <subcellularLocation>
        <location evidence="1">Protein storage vacuole membrane</location>
        <topology evidence="2">Single-pass type II membrane protein</topology>
    </subcellularLocation>
    <subcellularLocation>
        <location evidence="1">Cell membrane</location>
        <topology evidence="2">Single-pass type II membrane protein</topology>
    </subcellularLocation>
    <text evidence="1">Moves from the ER to vacuoles.</text>
</comment>
<comment type="induction">
    <text evidence="5">By cold stress.</text>
</comment>
<feature type="chain" id="PRO_0000433974" description="Protein SRC2">
    <location>
        <begin position="1"/>
        <end position="290"/>
    </location>
</feature>
<feature type="topological domain" description="Cytoplasmic" evidence="1">
    <location>
        <begin position="1"/>
        <end position="245"/>
    </location>
</feature>
<feature type="transmembrane region" description="Helical; Signal-anchor" evidence="2">
    <location>
        <begin position="246"/>
        <end position="268"/>
    </location>
</feature>
<feature type="topological domain" description="Lumenal" evidence="1">
    <location>
        <begin position="269"/>
        <end position="290"/>
    </location>
</feature>
<feature type="domain" description="C2" evidence="3">
    <location>
        <begin position="1"/>
        <end position="114"/>
    </location>
</feature>
<feature type="region of interest" description="Disordered" evidence="4">
    <location>
        <begin position="167"/>
        <end position="187"/>
    </location>
</feature>
<accession>O04133</accession>
<accession>I1MGQ0</accession>
<keyword id="KW-1003">Cell membrane</keyword>
<keyword id="KW-0256">Endoplasmic reticulum</keyword>
<keyword id="KW-0472">Membrane</keyword>
<keyword id="KW-1185">Reference proteome</keyword>
<keyword id="KW-0735">Signal-anchor</keyword>
<keyword id="KW-0346">Stress response</keyword>
<keyword id="KW-0812">Transmembrane</keyword>
<keyword id="KW-1133">Transmembrane helix</keyword>
<keyword id="KW-0926">Vacuole</keyword>
<name>SRC2_SOYBN</name>
<protein>
    <recommendedName>
        <fullName evidence="7">Protein SRC2</fullName>
    </recommendedName>
    <alternativeName>
        <fullName evidence="6">Protein SOYBEAN GENE REGULATED BY COLD 2</fullName>
    </alternativeName>
</protein>
<reference key="1">
    <citation type="journal article" date="1997" name="Plant Sci.">
        <title>cDNA sequence analysis and expression of two cold-regulated genes in soybean.</title>
        <authorList>
            <person name="Takahashi R."/>
            <person name="Shimosaka E."/>
        </authorList>
    </citation>
    <scope>NUCLEOTIDE SEQUENCE [MRNA]</scope>
    <scope>INDUCTION BY COLD STRESS</scope>
    <source>
        <strain>cv. Kitamusume</strain>
        <tissue>Leaf</tissue>
    </source>
</reference>
<reference key="2">
    <citation type="journal article" date="2010" name="Nature">
        <title>Genome sequence of the palaeopolyploid soybean.</title>
        <authorList>
            <person name="Schmutz J."/>
            <person name="Cannon S.B."/>
            <person name="Schlueter J."/>
            <person name="Ma J."/>
            <person name="Mitros T."/>
            <person name="Nelson W."/>
            <person name="Hyten D.L."/>
            <person name="Song Q."/>
            <person name="Thelen J.J."/>
            <person name="Cheng J."/>
            <person name="Xu D."/>
            <person name="Hellsten U."/>
            <person name="May G.D."/>
            <person name="Yu Y."/>
            <person name="Sakurai T."/>
            <person name="Umezawa T."/>
            <person name="Bhattacharyya M.K."/>
            <person name="Sandhu D."/>
            <person name="Valliyodan B."/>
            <person name="Lindquist E."/>
            <person name="Peto M."/>
            <person name="Grant D."/>
            <person name="Shu S."/>
            <person name="Goodstein D."/>
            <person name="Barry K."/>
            <person name="Futrell-Griggs M."/>
            <person name="Abernathy B."/>
            <person name="Du J."/>
            <person name="Tian Z."/>
            <person name="Zhu L."/>
            <person name="Gill N."/>
            <person name="Joshi T."/>
            <person name="Libault M."/>
            <person name="Sethuraman A."/>
            <person name="Zhang X.-C."/>
            <person name="Shinozaki K."/>
            <person name="Nguyen H.T."/>
            <person name="Wing R.A."/>
            <person name="Cregan P."/>
            <person name="Specht J."/>
            <person name="Grimwood J."/>
            <person name="Rokhsar D."/>
            <person name="Stacey G."/>
            <person name="Shoemaker R.C."/>
            <person name="Jackson S.A."/>
        </authorList>
    </citation>
    <scope>NUCLEOTIDE SEQUENCE [LARGE SCALE GENOMIC DNA]</scope>
    <source>
        <strain>cv. Williams 82</strain>
    </source>
</reference>
<sequence length="290" mass="31011">MTMEYRTLELNIISAKDIKNVNLFSKMDVYAAVSLSGDPLHPQGATTHVHKDAGSNPTWNYPVKFSVNESLAKENRLSLEIKLISDRTLGDTVIGTVHVPLRELLDNPGDDSSFRQVSYQVMKQSRKSKGSLNFSYKFGEHVPAPAAKTPKAAKAGQEPVMAYPPAGAGSSSMPYGTPHPPPPQQYAATGYGYPPQQVHGGYPPQAAYGYPPQTGYGYPQQSGYGYPQQSGYGYPPQAQKPKKNKFGMGLGAGLLGGALGGMLIGDMVSDAAEYDAGYDAGFDDAGGFDF</sequence>
<gene>
    <name evidence="6" type="primary">SRC2</name>
    <name evidence="7" type="ordered locus">Glyma15g16360</name>
</gene>
<dbReference type="EMBL" id="AB000130">
    <property type="protein sequence ID" value="BAA19769.1"/>
    <property type="molecule type" value="mRNA"/>
</dbReference>
<dbReference type="EMBL" id="CM000848">
    <property type="status" value="NOT_ANNOTATED_CDS"/>
    <property type="molecule type" value="Genomic_DNA"/>
</dbReference>
<dbReference type="PIR" id="T07080">
    <property type="entry name" value="T07080"/>
</dbReference>
<dbReference type="RefSeq" id="NP_001236659.1">
    <property type="nucleotide sequence ID" value="NM_001249730.1"/>
</dbReference>
<dbReference type="SMR" id="O04133"/>
<dbReference type="FunCoup" id="O04133">
    <property type="interactions" value="1028"/>
</dbReference>
<dbReference type="STRING" id="3847.O04133"/>
<dbReference type="PaxDb" id="3847-GLYMA15G16360.1"/>
<dbReference type="GeneID" id="547451"/>
<dbReference type="KEGG" id="gmx:547451"/>
<dbReference type="eggNOG" id="ENOG502QUNY">
    <property type="taxonomic scope" value="Eukaryota"/>
</dbReference>
<dbReference type="InParanoid" id="O04133"/>
<dbReference type="OrthoDB" id="270970at2759"/>
<dbReference type="Proteomes" id="UP000008827">
    <property type="component" value="Unplaced"/>
</dbReference>
<dbReference type="GO" id="GO:0005789">
    <property type="term" value="C:endoplasmic reticulum membrane"/>
    <property type="evidence" value="ECO:0007669"/>
    <property type="project" value="UniProtKB-SubCell"/>
</dbReference>
<dbReference type="GO" id="GO:0005886">
    <property type="term" value="C:plasma membrane"/>
    <property type="evidence" value="ECO:0007669"/>
    <property type="project" value="UniProtKB-SubCell"/>
</dbReference>
<dbReference type="GO" id="GO:0032586">
    <property type="term" value="C:protein storage vacuole membrane"/>
    <property type="evidence" value="ECO:0007669"/>
    <property type="project" value="UniProtKB-SubCell"/>
</dbReference>
<dbReference type="GO" id="GO:0006952">
    <property type="term" value="P:defense response"/>
    <property type="evidence" value="ECO:0007669"/>
    <property type="project" value="InterPro"/>
</dbReference>
<dbReference type="CDD" id="cd04051">
    <property type="entry name" value="C2_SRC2_like"/>
    <property type="match status" value="1"/>
</dbReference>
<dbReference type="Gene3D" id="2.60.40.150">
    <property type="entry name" value="C2 domain"/>
    <property type="match status" value="1"/>
</dbReference>
<dbReference type="InterPro" id="IPR000008">
    <property type="entry name" value="C2_dom"/>
</dbReference>
<dbReference type="InterPro" id="IPR035892">
    <property type="entry name" value="C2_domain_sf"/>
</dbReference>
<dbReference type="InterPro" id="IPR044750">
    <property type="entry name" value="C2_SRC2/BAP"/>
</dbReference>
<dbReference type="PANTHER" id="PTHR32246">
    <property type="entry name" value="INGRESSION PROTEIN FIC1"/>
    <property type="match status" value="1"/>
</dbReference>
<dbReference type="PANTHER" id="PTHR32246:SF100">
    <property type="entry name" value="PROTEIN SRC2"/>
    <property type="match status" value="1"/>
</dbReference>
<dbReference type="Pfam" id="PF00168">
    <property type="entry name" value="C2"/>
    <property type="match status" value="1"/>
</dbReference>
<dbReference type="SMART" id="SM00239">
    <property type="entry name" value="C2"/>
    <property type="match status" value="1"/>
</dbReference>
<dbReference type="SUPFAM" id="SSF49562">
    <property type="entry name" value="C2 domain (Calcium/lipid-binding domain, CaLB)"/>
    <property type="match status" value="1"/>
</dbReference>
<dbReference type="PROSITE" id="PS50004">
    <property type="entry name" value="C2"/>
    <property type="match status" value="1"/>
</dbReference>
<proteinExistence type="evidence at transcript level"/>
<organism>
    <name type="scientific">Glycine max</name>
    <name type="common">Soybean</name>
    <name type="synonym">Glycine hispida</name>
    <dbReference type="NCBI Taxonomy" id="3847"/>
    <lineage>
        <taxon>Eukaryota</taxon>
        <taxon>Viridiplantae</taxon>
        <taxon>Streptophyta</taxon>
        <taxon>Embryophyta</taxon>
        <taxon>Tracheophyta</taxon>
        <taxon>Spermatophyta</taxon>
        <taxon>Magnoliopsida</taxon>
        <taxon>eudicotyledons</taxon>
        <taxon>Gunneridae</taxon>
        <taxon>Pentapetalae</taxon>
        <taxon>rosids</taxon>
        <taxon>fabids</taxon>
        <taxon>Fabales</taxon>
        <taxon>Fabaceae</taxon>
        <taxon>Papilionoideae</taxon>
        <taxon>50 kb inversion clade</taxon>
        <taxon>NPAAA clade</taxon>
        <taxon>indigoferoid/millettioid clade</taxon>
        <taxon>Phaseoleae</taxon>
        <taxon>Glycine</taxon>
        <taxon>Glycine subgen. Soja</taxon>
    </lineage>
</organism>